<accession>O77836</accession>
<keyword id="KW-0175">Coiled coil</keyword>
<keyword id="KW-0903">Direct protein sequencing</keyword>
<keyword id="KW-0325">Glycoprotein</keyword>
<keyword id="KW-0328">Glycosyltransferase</keyword>
<keyword id="KW-0333">Golgi apparatus</keyword>
<keyword id="KW-0472">Membrane</keyword>
<keyword id="KW-0479">Metal-binding</keyword>
<keyword id="KW-0597">Phosphoprotein</keyword>
<keyword id="KW-1185">Reference proteome</keyword>
<keyword id="KW-0964">Secreted</keyword>
<keyword id="KW-0735">Signal-anchor</keyword>
<keyword id="KW-0808">Transferase</keyword>
<keyword id="KW-0812">Transmembrane</keyword>
<keyword id="KW-1133">Transmembrane helix</keyword>
<sequence length="535" mass="61618">MRLRNGTVATVLAFITSFLTLSWYTTWQNGKEKVIAYQREFLALKERLRIAEHRISQRSSELSAIVQQFKRVEAETNRSKDPVNKFSDDTLKILKELTSKKSLQVPSIYYHLPHLLQNEGSLQPAVQIGNGRTGVSIVMGIPTVKREVKSYLIETLHSLIDNLYPEEKLDCVIVVFIGETDTDYVNGVVANLEKEFSKEISSGLVEIISPPESYYPDLTNLKETFGDSKERVRWRTKQNLDYCFLMMYAQEKGTYYIQLEDDIIVKQNYFNTIKNFALQLSSEEWMILEFSQLGFIGKMFQAPDLTLIVEFIFMFYKEKPIDWLLDHILWVKVCNPEKDAKHCDRQKANLRIRFRPSLFQHVGLHSSLTGKIQKLTDKDYMKPLLLKIHVNPPAEVSTSLKVYQGHTLEKTYMGEDFFWAITPVAGDYILFKFDKPVNVESYLFHSGNQDHPGDILLNTTVEVLPLKSEGLDISKETKDKRLEDGYFRIGKFENGVAEGMVDPSLNPISAFRLSVIQNSAVWAILNEIHIKKVTN</sequence>
<dbReference type="EC" id="2.4.1.145" evidence="5 6"/>
<dbReference type="EMBL" id="AB000628">
    <property type="protein sequence ID" value="BAA31162.1"/>
    <property type="molecule type" value="mRNA"/>
</dbReference>
<dbReference type="RefSeq" id="NP_803486.1">
    <property type="nucleotide sequence ID" value="NM_177520.3"/>
</dbReference>
<dbReference type="RefSeq" id="XP_024854102.1">
    <property type="nucleotide sequence ID" value="XM_024998334.2"/>
</dbReference>
<dbReference type="SMR" id="O77836"/>
<dbReference type="FunCoup" id="O77836">
    <property type="interactions" value="966"/>
</dbReference>
<dbReference type="STRING" id="9913.ENSBTAP00000013715"/>
<dbReference type="CAZy" id="GT54">
    <property type="family name" value="Glycosyltransferase Family 54"/>
</dbReference>
<dbReference type="GlyCosmos" id="O77836">
    <property type="glycosylation" value="2 sites, No reported glycans"/>
</dbReference>
<dbReference type="GlyGen" id="O77836">
    <property type="glycosylation" value="2 sites"/>
</dbReference>
<dbReference type="iPTMnet" id="O77836"/>
<dbReference type="PaxDb" id="9913-ENSBTAP00000013715"/>
<dbReference type="Ensembl" id="ENSBTAT00000013715.6">
    <property type="protein sequence ID" value="ENSBTAP00000013715.6"/>
    <property type="gene ID" value="ENSBTAG00000010388.7"/>
</dbReference>
<dbReference type="GeneID" id="282276"/>
<dbReference type="KEGG" id="bta:282276"/>
<dbReference type="CTD" id="11320"/>
<dbReference type="VEuPathDB" id="HostDB:ENSBTAG00000010388"/>
<dbReference type="VGNC" id="VGNC:96699">
    <property type="gene designation" value="MGAT4A"/>
</dbReference>
<dbReference type="eggNOG" id="ENOG502QPQJ">
    <property type="taxonomic scope" value="Eukaryota"/>
</dbReference>
<dbReference type="GeneTree" id="ENSGT00940000159177"/>
<dbReference type="InParanoid" id="O77836"/>
<dbReference type="OMA" id="QFAHINP"/>
<dbReference type="OrthoDB" id="2016523at2759"/>
<dbReference type="BRENDA" id="2.4.1.145">
    <property type="organism ID" value="908"/>
</dbReference>
<dbReference type="Reactome" id="R-BTA-381426">
    <property type="pathway name" value="Regulation of Insulin-like Growth Factor (IGF) transport and uptake by Insulin-like Growth Factor Binding Proteins (IGFBPs)"/>
</dbReference>
<dbReference type="Reactome" id="R-BTA-8957275">
    <property type="pathway name" value="Post-translational protein phosphorylation"/>
</dbReference>
<dbReference type="Reactome" id="R-BTA-975577">
    <property type="pathway name" value="N-Glycan antennae elongation"/>
</dbReference>
<dbReference type="UniPathway" id="UPA00378"/>
<dbReference type="Proteomes" id="UP000009136">
    <property type="component" value="Chromosome 11"/>
</dbReference>
<dbReference type="Bgee" id="ENSBTAG00000010388">
    <property type="expression patterns" value="Expressed in spiral colon and 110 other cell types or tissues"/>
</dbReference>
<dbReference type="GO" id="GO:0005783">
    <property type="term" value="C:endoplasmic reticulum"/>
    <property type="evidence" value="ECO:0000318"/>
    <property type="project" value="GO_Central"/>
</dbReference>
<dbReference type="GO" id="GO:0005793">
    <property type="term" value="C:endoplasmic reticulum-Golgi intermediate compartment"/>
    <property type="evidence" value="ECO:0000318"/>
    <property type="project" value="GO_Central"/>
</dbReference>
<dbReference type="GO" id="GO:0005576">
    <property type="term" value="C:extracellular region"/>
    <property type="evidence" value="ECO:0007669"/>
    <property type="project" value="UniProtKB-SubCell"/>
</dbReference>
<dbReference type="GO" id="GO:0000139">
    <property type="term" value="C:Golgi membrane"/>
    <property type="evidence" value="ECO:0007669"/>
    <property type="project" value="UniProtKB-SubCell"/>
</dbReference>
<dbReference type="GO" id="GO:0005795">
    <property type="term" value="C:Golgi stack"/>
    <property type="evidence" value="ECO:0000318"/>
    <property type="project" value="GO_Central"/>
</dbReference>
<dbReference type="GO" id="GO:0005777">
    <property type="term" value="C:peroxisome"/>
    <property type="evidence" value="ECO:0000250"/>
    <property type="project" value="UniProtKB"/>
</dbReference>
<dbReference type="GO" id="GO:0008375">
    <property type="term" value="F:acetylglucosaminyltransferase activity"/>
    <property type="evidence" value="ECO:0000318"/>
    <property type="project" value="GO_Central"/>
</dbReference>
<dbReference type="GO" id="GO:0008453">
    <property type="term" value="F:alanine-glyoxylate transaminase activity"/>
    <property type="evidence" value="ECO:0000250"/>
    <property type="project" value="UniProtKB"/>
</dbReference>
<dbReference type="GO" id="GO:0008454">
    <property type="term" value="F:alpha-1,3-mannosylglycoprotein 4-beta-N-acetylglucosaminyltransferase activity"/>
    <property type="evidence" value="ECO:0000314"/>
    <property type="project" value="UniProtKB"/>
</dbReference>
<dbReference type="GO" id="GO:0046872">
    <property type="term" value="F:metal ion binding"/>
    <property type="evidence" value="ECO:0007669"/>
    <property type="project" value="UniProtKB-KW"/>
</dbReference>
<dbReference type="GO" id="GO:0042803">
    <property type="term" value="F:protein homodimerization activity"/>
    <property type="evidence" value="ECO:0000250"/>
    <property type="project" value="UniProtKB"/>
</dbReference>
<dbReference type="GO" id="GO:0046487">
    <property type="term" value="P:glyoxylate metabolic process"/>
    <property type="evidence" value="ECO:0000250"/>
    <property type="project" value="UniProtKB"/>
</dbReference>
<dbReference type="GO" id="GO:0006491">
    <property type="term" value="P:N-glycan processing"/>
    <property type="evidence" value="ECO:0000314"/>
    <property type="project" value="UniProtKB"/>
</dbReference>
<dbReference type="GO" id="GO:0006487">
    <property type="term" value="P:protein N-linked glycosylation"/>
    <property type="evidence" value="ECO:0000318"/>
    <property type="project" value="GO_Central"/>
</dbReference>
<dbReference type="InterPro" id="IPR006759">
    <property type="entry name" value="Glyco_transf_54"/>
</dbReference>
<dbReference type="InterPro" id="IPR056576">
    <property type="entry name" value="MGAT4_A/B/C_C"/>
</dbReference>
<dbReference type="PANTHER" id="PTHR12062:SF4">
    <property type="entry name" value="ALPHA-1,3-MANNOSYL-GLYCOPROTEIN 4-BETA-N-ACETYLGLUCOSAMINYLTRANSFERASE A"/>
    <property type="match status" value="1"/>
</dbReference>
<dbReference type="PANTHER" id="PTHR12062">
    <property type="entry name" value="N-ACETYLGLUCOSAMINYLTRANSFERASE VI"/>
    <property type="match status" value="1"/>
</dbReference>
<dbReference type="Pfam" id="PF04666">
    <property type="entry name" value="MGAT4_cons"/>
    <property type="match status" value="1"/>
</dbReference>
<dbReference type="Pfam" id="PF23524">
    <property type="entry name" value="MGAT4A_C"/>
    <property type="match status" value="1"/>
</dbReference>
<organism>
    <name type="scientific">Bos taurus</name>
    <name type="common">Bovine</name>
    <dbReference type="NCBI Taxonomy" id="9913"/>
    <lineage>
        <taxon>Eukaryota</taxon>
        <taxon>Metazoa</taxon>
        <taxon>Chordata</taxon>
        <taxon>Craniata</taxon>
        <taxon>Vertebrata</taxon>
        <taxon>Euteleostomi</taxon>
        <taxon>Mammalia</taxon>
        <taxon>Eutheria</taxon>
        <taxon>Laurasiatheria</taxon>
        <taxon>Artiodactyla</taxon>
        <taxon>Ruminantia</taxon>
        <taxon>Pecora</taxon>
        <taxon>Bovidae</taxon>
        <taxon>Bovinae</taxon>
        <taxon>Bos</taxon>
    </lineage>
</organism>
<proteinExistence type="evidence at protein level"/>
<evidence type="ECO:0000250" key="1">
    <source>
        <dbReference type="UniProtKB" id="Q812G0"/>
    </source>
</evidence>
<evidence type="ECO:0000250" key="2">
    <source>
        <dbReference type="UniProtKB" id="Q9D4R2"/>
    </source>
</evidence>
<evidence type="ECO:0000250" key="3">
    <source>
        <dbReference type="UniProtKB" id="Q9UM21"/>
    </source>
</evidence>
<evidence type="ECO:0000255" key="4"/>
<evidence type="ECO:0000269" key="5">
    <source>
    </source>
</evidence>
<evidence type="ECO:0000269" key="6">
    <source>
    </source>
</evidence>
<evidence type="ECO:0000305" key="7"/>
<evidence type="ECO:0000305" key="8">
    <source>
    </source>
</evidence>
<protein>
    <recommendedName>
        <fullName evidence="3">Alpha-1,3-mannosyl-glycoprotein 4-beta-N-acetylglucosaminyltransferase A</fullName>
        <ecNumber evidence="5 6">2.4.1.145</ecNumber>
    </recommendedName>
    <alternativeName>
        <fullName>N-glycosyl-oligosaccharide-glycoprotein N-acetylglucosaminyltransferase IVa</fullName>
        <shortName>GlcNAc-T IVa</shortName>
        <shortName>GnT-IVa</shortName>
        <shortName>N-acetylglucosaminyltransferase IVa</shortName>
    </alternativeName>
    <alternativeName>
        <fullName>UDP-N-acetylglucosamine: alpha-1,3-D-mannoside beta-1,4-N-acetylglucosaminyltransferase IVa</fullName>
    </alternativeName>
    <component>
        <recommendedName>
            <fullName>Alpha-1,3-mannosyl-glycoprotein 4-beta-N-acetylglucosaminyltransferase A soluble form</fullName>
        </recommendedName>
    </component>
</protein>
<gene>
    <name evidence="3" type="primary">MGAT4A</name>
</gene>
<feature type="chain" id="PRO_0000288579" description="Alpha-1,3-mannosyl-glycoprotein 4-beta-N-acetylglucosaminyltransferase A">
    <location>
        <begin position="1"/>
        <end position="535"/>
    </location>
</feature>
<feature type="chain" id="PRO_0000288580" description="Alpha-1,3-mannosyl-glycoprotein 4-beta-N-acetylglucosaminyltransferase A soluble form" evidence="6">
    <location>
        <begin position="93"/>
        <end position="535"/>
    </location>
</feature>
<feature type="topological domain" description="Cytoplasmic" evidence="4">
    <location>
        <begin position="1"/>
        <end position="6"/>
    </location>
</feature>
<feature type="transmembrane region" description="Helical; Signal-anchor for type II membrane protein" evidence="4">
    <location>
        <begin position="7"/>
        <end position="27"/>
    </location>
</feature>
<feature type="topological domain" description="Lumenal" evidence="4">
    <location>
        <begin position="28"/>
        <end position="535"/>
    </location>
</feature>
<feature type="coiled-coil region" evidence="4">
    <location>
        <begin position="31"/>
        <end position="57"/>
    </location>
</feature>
<feature type="modified residue" description="Phosphoserine" evidence="3">
    <location>
        <position position="474"/>
    </location>
</feature>
<feature type="glycosylation site" description="N-linked (GlcNAc...) asparagine" evidence="4">
    <location>
        <position position="77"/>
    </location>
</feature>
<feature type="glycosylation site" description="N-linked (GlcNAc...) asparagine" evidence="6">
    <location>
        <position position="458"/>
    </location>
</feature>
<feature type="mutagenesis site" description="Does not abolish enzyme activity." evidence="6">
    <original>S</original>
    <variation>A</variation>
    <location>
        <position position="79"/>
    </location>
</feature>
<feature type="mutagenesis site" description="Does not abolish enzyme activity." evidence="6">
    <original>T</original>
    <variation>A</variation>
    <location>
        <position position="460"/>
    </location>
</feature>
<name>MGT4A_BOVIN</name>
<reference key="1">
    <citation type="journal article" date="1998" name="J. Biol. Chem.">
        <title>cDNA cloning and expression of bovine UDP-N-acetylglucosamine: alpha1, 3-D-mannoside beta1,4-N-acetylglucosaminyltransferase IV.</title>
        <authorList>
            <person name="Minowa M.T."/>
            <person name="Oguri S."/>
            <person name="Yoshida A."/>
            <person name="Hara T."/>
            <person name="Iwamatsu A."/>
            <person name="Ikenaga H."/>
            <person name="Takeuchi M."/>
        </authorList>
    </citation>
    <scope>NUCLEOTIDE SEQUENCE [MRNA]</scope>
    <scope>PROTEIN SEQUENCE OF 93-96; 161-168; 183-194; 198-222; 230-251; 261-266; 326-331; 379-382; 387-425; 427-432; 434-448; 454-463; 467-475 AND 484-491</scope>
    <scope>GLYCOSYLATION AT ASN-458</scope>
    <scope>MUTAGENESIS OF SER-79 AND THR-460</scope>
    <scope>FUNCTION</scope>
    <scope>CATALYTIC ACTIVITY</scope>
    <scope>PATHWAY</scope>
    <source>
        <tissue>Small intestine</tissue>
    </source>
</reference>
<reference key="2">
    <citation type="journal article" date="1997" name="J. Biol. Chem.">
        <title>Purification and characterization of UDP-N-acetylglucosamine: alpha1,3-D-mannoside beta1,4-N-acetylglucosaminyltransferase (N-acetylglucosaminyltransferase-IV) from bovine small intestine.</title>
        <authorList>
            <person name="Oguri S."/>
            <person name="Minowa M.T."/>
            <person name="Ihara Y."/>
            <person name="Taniguchi N."/>
            <person name="Ikenaga H."/>
            <person name="Takeuchi M."/>
        </authorList>
    </citation>
    <scope>IDENTIFICATION</scope>
    <scope>COFACTOR</scope>
    <scope>CATALYTIC ACTIVITY</scope>
    <scope>FUNCTION</scope>
    <scope>PATHWAY</scope>
    <scope>GLYCOSYLATION</scope>
    <scope>BIOPHYSICOCHEMICAL PROPERTIES</scope>
    <scope>ACTIVITY REGULATION</scope>
</reference>
<comment type="function">
    <text evidence="1 5 6">Glycosyltransferase that catalyze the transfer of GlcNAc from UDP-GlcNAc to the GlcNAcbeta1-2Manalpha1-3 arm of the core structure of N-linked glycans through a beta1-4 linkage and participates in the production of tri- and tetra-antennary N-linked sugar chains (PubMed:9278430, PubMed:9565571). Involved in glucose transport by mediating SLC2A2/GLUT2 glycosylation, thereby controlling cell-surface expression of SLC2A2 in pancreatic beta cells (By similarity).</text>
</comment>
<comment type="catalytic activity">
    <reaction evidence="5 6">
        <text>N(4)-{beta-D-GlcNAc-(1-&gt;2)-alpha-D-Man-(1-&gt;3)-[beta-D-GlcNAc-(1-&gt;2)-alpha-D-Man-(1-&gt;6)]-beta-D-Man-(1-&gt;4)-beta-D-GlcNAc-(1-&gt;4)-beta-D-GlcNAc}-L-asparaginyl-[protein] + UDP-N-acetyl-alpha-D-glucosamine = N(4)-{beta-D-GlcNAc-(1-&gt;2)-[beta-D-GlcNAc-(1-&gt;4)]-alpha-D-Man-(1-&gt;3)-[beta-D-GlcNAc-(1-&gt;2)-alpha-D-Man-(1-&gt;6)]-beta-D-Man-(1-&gt;4)-beta-D-GlcNAc-(1-&gt;4)-beta-D-GlcNAc}-L-asparaginyl-[protein] + UDP + H(+)</text>
        <dbReference type="Rhea" id="RHEA:16057"/>
        <dbReference type="Rhea" id="RHEA-COMP:13526"/>
        <dbReference type="Rhea" id="RHEA-COMP:14374"/>
        <dbReference type="ChEBI" id="CHEBI:15378"/>
        <dbReference type="ChEBI" id="CHEBI:57705"/>
        <dbReference type="ChEBI" id="CHEBI:58223"/>
        <dbReference type="ChEBI" id="CHEBI:60651"/>
        <dbReference type="ChEBI" id="CHEBI:139507"/>
        <dbReference type="EC" id="2.4.1.145"/>
    </reaction>
    <physiologicalReaction direction="left-to-right" evidence="5 8">
        <dbReference type="Rhea" id="RHEA:16058"/>
    </physiologicalReaction>
</comment>
<comment type="catalytic activity">
    <reaction evidence="5">
        <text>an N(4)-{beta-D-GlcNAc-(1-&gt;2)-alpha-D-Man-(1-&gt;3)-[alpha-D-Man-(1-&gt;6)]-beta-D-Man-(1-&gt;4)-beta-D-GlcNAc-(1-&gt;4)-beta-D-GlcNAc}-L-asparaginyl-[protein] + UDP-N-acetyl-alpha-D-glucosamine = an N(4)-{beta-D-GlcNAc-(1-&gt;2)-[beta-D-GlcNAc-(1-&gt;4)]-alpha-D-Man-(1-&gt;3)-[alpha-D-Man-(1-&gt;6)]-beta-D-Man-(1-&gt;4)-beta-D-GlcNAc-(1-&gt;4)-beta-D-GlcNAc}-L-asparaginyl-[protein] + UDP + H(+)</text>
        <dbReference type="Rhea" id="RHEA:69615"/>
        <dbReference type="Rhea" id="RHEA-COMP:14369"/>
        <dbReference type="Rhea" id="RHEA-COMP:17732"/>
        <dbReference type="ChEBI" id="CHEBI:15378"/>
        <dbReference type="ChEBI" id="CHEBI:57705"/>
        <dbReference type="ChEBI" id="CHEBI:58223"/>
        <dbReference type="ChEBI" id="CHEBI:60615"/>
        <dbReference type="ChEBI" id="CHEBI:187873"/>
    </reaction>
    <physiologicalReaction direction="left-to-right" evidence="5">
        <dbReference type="Rhea" id="RHEA:69616"/>
    </physiologicalReaction>
</comment>
<comment type="catalytic activity">
    <reaction evidence="5">
        <text>an N(4)-{beta-D-GlcNAc-(1-&gt;2)-alpha-D-Man-(1-&gt;3)-[beta-D-GlcNAc-(1-&gt;2)-[beta-D-GlcNAc-(1-&gt;6)]-alpha-D-Man-(1-&gt;6)]-beta-D-Man-(1-&gt;4)-beta-D-GlcNAc-(1-&gt;4)-beta-D-GlcNAc}-L-asparaginyl-[protein] + UDP-N-acetyl-alpha-D-glucosamine = an N(4)-{beta-D-GlcNAc-(1-&gt;2)-[beta-D-GlcNAc-(1-&gt;4)]-alpha-D-Man-(1-&gt;3)-[beta-D-GlcNAc-(1-&gt;2)-[beta-D-GlcNAc-(1-&gt;6)]-alpha-D-Man-(1-&gt;6)]-beta-D-Man-(1-&gt;4)-beta-D-GlcNAc-(1-&gt;4)-beta-D-GlcNAc}-L-asparaginyl-[protein] + UDP + H(+)</text>
        <dbReference type="Rhea" id="RHEA:69619"/>
        <dbReference type="Rhea" id="RHEA-COMP:17733"/>
        <dbReference type="Rhea" id="RHEA-COMP:17734"/>
        <dbReference type="ChEBI" id="CHEBI:15378"/>
        <dbReference type="ChEBI" id="CHEBI:57705"/>
        <dbReference type="ChEBI" id="CHEBI:58223"/>
        <dbReference type="ChEBI" id="CHEBI:187874"/>
        <dbReference type="ChEBI" id="CHEBI:187875"/>
    </reaction>
    <physiologicalReaction direction="left-to-right" evidence="5">
        <dbReference type="Rhea" id="RHEA:69620"/>
    </physiologicalReaction>
</comment>
<comment type="catalytic activity">
    <reaction evidence="3">
        <text>an N(4)-{beta-D-GlcNAc-(1-&gt;2)-alpha-D-Man-(1-&gt;3)-[beta-D-GlcNAc-(1-&gt;2)-alpha-D-Man-(1-&gt;6)]-beta-D-Man-(1-&gt;4)-beta-D-GlcNAc-(1-&gt;4)-[alpha-L-Fuc-(1-&gt;6)]-beta-D-GlcNAc}-L-asparaginyl-[protein] + UDP-N-acetyl-alpha-D-glucosamine = N(4)-{beta-D-GlcNAc-(1-&gt;2)-[beta-D-GlcNAc-(1-&gt;4)]-alpha-D-Man-(1-&gt;3)-[beta-D-GlcNAc-(1-&gt;2)-alpha-D-Man-(1-&gt;6)]-beta-D-Man-(1-&gt;4)-beta-D-GlcNAc-(1-&gt;4)-[alpha-L-Fuc-(1-&gt;6)]-beta-D-GlcNAc}-asparaginyl-[protein] + UDP + H(+)</text>
        <dbReference type="Rhea" id="RHEA:69623"/>
        <dbReference type="Rhea" id="RHEA-COMP:13532"/>
        <dbReference type="Rhea" id="RHEA-COMP:18198"/>
        <dbReference type="ChEBI" id="CHEBI:15378"/>
        <dbReference type="ChEBI" id="CHEBI:57705"/>
        <dbReference type="ChEBI" id="CHEBI:58223"/>
        <dbReference type="ChEBI" id="CHEBI:137207"/>
        <dbReference type="ChEBI" id="CHEBI:187877"/>
    </reaction>
    <physiologicalReaction direction="left-to-right" evidence="3">
        <dbReference type="Rhea" id="RHEA:69624"/>
    </physiologicalReaction>
</comment>
<comment type="catalytic activity">
    <reaction evidence="3">
        <text>an N(4)-{beta-D-GlcNAc-(1-&gt;2)-alpha-D-Man-(1-&gt;3)-[beta-D-Gal-(1-&gt;4)-beta-D-GlcNAc-(1-&gt;2)-alpha-D-Man-(1-&gt;6)]-beta-D-Man-(1-&gt;4)-beta-D-GlcNAc-(1-&gt;4)-beta-D-GlcNAc}-L-asparaginyl-[protein] + UDP-N-acetyl-alpha-D-glucosamine = an N(4)-{beta-D-GlcNAc-(1-&gt;2)-[beta-D-GlcNAc-(1-&gt;4)]-alpha-D-Man-(1-&gt;3)-[beta-D-Gal-(1-&gt;4)-beta-D-GlcNAc-(1-&gt;2)-alpha-D-Man-(1-&gt;6)]-beta-D-Man-(1-&gt;4)-beta-D-GlcNAc-(1-&gt;4)-beta-D-GlcNAc}-L-asparaginyl-[protein] + UDP + H(+)</text>
        <dbReference type="Rhea" id="RHEA:69627"/>
        <dbReference type="Rhea" id="RHEA-COMP:17737"/>
        <dbReference type="Rhea" id="RHEA-COMP:17738"/>
        <dbReference type="ChEBI" id="CHEBI:15378"/>
        <dbReference type="ChEBI" id="CHEBI:57705"/>
        <dbReference type="ChEBI" id="CHEBI:58223"/>
        <dbReference type="ChEBI" id="CHEBI:187878"/>
        <dbReference type="ChEBI" id="CHEBI:187879"/>
    </reaction>
    <physiologicalReaction direction="left-to-right" evidence="3">
        <dbReference type="Rhea" id="RHEA:69628"/>
    </physiologicalReaction>
</comment>
<comment type="catalytic activity">
    <reaction evidence="3">
        <text>N(4)-{beta-D-GlcNAc-(1-&gt;2)-alpha-D-Man-(1-&gt;3)-[alpha-D-Man-(1-&gt;3)-{alpha-D-Man-(1-&gt;6)}-alpha-D-Man-(1-&gt;6)]-beta-D-Man-(1-&gt;4)-beta-D-GlcNAc-(1-&gt;4)-beta-D-GlcNAc}-asparaginyl-[protein] + UDP-N-acetyl-alpha-D-glucosamine = N(4)-{beta-D-GlcNAc-(1-&gt;2)-[beta-D-GlcNAc-(1-&gt;4)]-alpha-D-Man-(1-&gt;3)-[alpha-D-Man-(1-&gt;3)-{alpha-D-Man-(1-&gt;6)}-alpha-D-Man-(1-&gt;6)]-beta-D-Man-(1-&gt;4)-beta-D-GlcNAc-(1-&gt;4)-beta-D-GlcNAc}-asparaginyl-[protein] + UDP + H(+)</text>
        <dbReference type="Rhea" id="RHEA:69631"/>
        <dbReference type="Rhea" id="RHEA-COMP:17739"/>
        <dbReference type="Rhea" id="RHEA-COMP:17740"/>
        <dbReference type="ChEBI" id="CHEBI:15378"/>
        <dbReference type="ChEBI" id="CHEBI:57705"/>
        <dbReference type="ChEBI" id="CHEBI:58223"/>
        <dbReference type="ChEBI" id="CHEBI:187880"/>
        <dbReference type="ChEBI" id="CHEBI:187881"/>
    </reaction>
    <physiologicalReaction direction="left-to-right" evidence="3">
        <dbReference type="Rhea" id="RHEA:69632"/>
    </physiologicalReaction>
</comment>
<comment type="catalytic activity">
    <reaction evidence="3">
        <text>N(4)-{beta-D-GlcNAc-(1-&gt;2)-alpha-D-Man-(1-&gt;3)-beta-D-Man-(1-&gt;4)-beta-D-GlcNAc-(1-&gt;4)-beta-D-GlcNAc}-asparaginyl-[protein] + UDP-N-acetyl-alpha-D-glucosamine = N(4)-{beta-D-GlcNAc-(1-&gt;2)-[beta-D-GlcNAc-(1-&gt;4)]-alpha-D-Man-(1-&gt;3)-beta-D-Man-(1-&gt;4)-beta-D-GlcNAc-(1-&gt;4)-beta-D-GlcNAc}-asparaginyl-[protein] + UDP + H(+)</text>
        <dbReference type="Rhea" id="RHEA:69635"/>
        <dbReference type="Rhea" id="RHEA-COMP:17741"/>
        <dbReference type="Rhea" id="RHEA-COMP:17742"/>
        <dbReference type="ChEBI" id="CHEBI:15378"/>
        <dbReference type="ChEBI" id="CHEBI:57705"/>
        <dbReference type="ChEBI" id="CHEBI:58223"/>
        <dbReference type="ChEBI" id="CHEBI:187882"/>
        <dbReference type="ChEBI" id="CHEBI:187883"/>
    </reaction>
    <physiologicalReaction direction="left-to-right" evidence="3">
        <dbReference type="Rhea" id="RHEA:69636"/>
    </physiologicalReaction>
</comment>
<comment type="cofactor">
    <cofactor evidence="5">
        <name>a divalent metal cation</name>
        <dbReference type="ChEBI" id="CHEBI:60240"/>
    </cofactor>
</comment>
<comment type="activity regulation">
    <text evidence="5">Inhibited by UDP.</text>
</comment>
<comment type="biophysicochemical properties">
    <kinetics>
        <KM evidence="5">0.73 mM for Gn2(2',2)core-PA</KM>
        <KM evidence="5">0.13 mM for Gn2(29,2)core-PAGn3(6',2',2)core-PA</KM>
        <KM evidence="5">0.22 mM for UDP-N-acetyl-alpha-D-glucosamine (with 0.8 mM Gn2(2',2)core-PA as an acceptor)</KM>
    </kinetics>
    <phDependence>
        <text evidence="5">Optimum pH is 7.3.</text>
    </phDependence>
</comment>
<comment type="pathway">
    <text evidence="5 6">Protein modification; protein glycosylation.</text>
</comment>
<comment type="subcellular location">
    <subcellularLocation>
        <location evidence="2">Golgi apparatus membrane</location>
        <topology evidence="2">Single-pass type II membrane protein</topology>
    </subcellularLocation>
</comment>
<comment type="subcellular location">
    <molecule>Alpha-1,3-mannosyl-glycoprotein 4-beta-N-acetylglucosaminyltransferase A soluble form</molecule>
    <subcellularLocation>
        <location evidence="8">Secreted</location>
    </subcellularLocation>
</comment>
<comment type="tissue specificity">
    <text>Highly expressed in small intestine, kidney, lung and spleen. Weakly expressed in brain, heart and liver.</text>
</comment>
<comment type="PTM">
    <text evidence="5">N-glycosylated.</text>
</comment>
<comment type="similarity">
    <text evidence="7">Belongs to the glycosyltransferase 54 family.</text>
</comment>